<organism>
    <name type="scientific">Salmonella typhi</name>
    <dbReference type="NCBI Taxonomy" id="90370"/>
    <lineage>
        <taxon>Bacteria</taxon>
        <taxon>Pseudomonadati</taxon>
        <taxon>Pseudomonadota</taxon>
        <taxon>Gammaproteobacteria</taxon>
        <taxon>Enterobacterales</taxon>
        <taxon>Enterobacteriaceae</taxon>
        <taxon>Salmonella</taxon>
    </lineage>
</organism>
<evidence type="ECO:0000255" key="1">
    <source>
        <dbReference type="HAMAP-Rule" id="MF_00659"/>
    </source>
</evidence>
<gene>
    <name evidence="1" type="primary">ybeD</name>
    <name type="ordered locus">STY0687</name>
    <name type="ordered locus">t2231</name>
</gene>
<proteinExistence type="inferred from homology"/>
<name>YBED_SALTI</name>
<protein>
    <recommendedName>
        <fullName evidence="1">UPF0250 protein YbeD</fullName>
    </recommendedName>
</protein>
<comment type="similarity">
    <text evidence="1">Belongs to the UPF0250 family.</text>
</comment>
<sequence>MKTKLNELLEFPTPFTYKVMGQALPELVDQVVEVVQRHAPGDYSPTVKPSSKGNYHSVSITINATHIEQVETLYEELGNIDIVRMVL</sequence>
<accession>P67538</accession>
<accession>Q8XGV6</accession>
<dbReference type="EMBL" id="AL513382">
    <property type="protein sequence ID" value="CAD05113.1"/>
    <property type="molecule type" value="Genomic_DNA"/>
</dbReference>
<dbReference type="EMBL" id="AE014613">
    <property type="protein sequence ID" value="AAO69834.1"/>
    <property type="molecule type" value="Genomic_DNA"/>
</dbReference>
<dbReference type="RefSeq" id="NP_455212.1">
    <property type="nucleotide sequence ID" value="NC_003198.1"/>
</dbReference>
<dbReference type="RefSeq" id="WP_000850547.1">
    <property type="nucleotide sequence ID" value="NZ_WSUR01000015.1"/>
</dbReference>
<dbReference type="SMR" id="P67538"/>
<dbReference type="STRING" id="220341.gene:17584694"/>
<dbReference type="GeneID" id="83645644"/>
<dbReference type="KEGG" id="stt:t2231"/>
<dbReference type="KEGG" id="sty:STY0687"/>
<dbReference type="PATRIC" id="fig|220341.7.peg.690"/>
<dbReference type="eggNOG" id="COG2921">
    <property type="taxonomic scope" value="Bacteria"/>
</dbReference>
<dbReference type="HOGENOM" id="CLU_161438_2_1_6"/>
<dbReference type="OMA" id="MNTKFDE"/>
<dbReference type="OrthoDB" id="9793424at2"/>
<dbReference type="Proteomes" id="UP000000541">
    <property type="component" value="Chromosome"/>
</dbReference>
<dbReference type="Proteomes" id="UP000002670">
    <property type="component" value="Chromosome"/>
</dbReference>
<dbReference type="GO" id="GO:0005829">
    <property type="term" value="C:cytosol"/>
    <property type="evidence" value="ECO:0007669"/>
    <property type="project" value="TreeGrafter"/>
</dbReference>
<dbReference type="FunFam" id="3.30.70.260:FF:000002">
    <property type="entry name" value="UPF0250 protein YbeD"/>
    <property type="match status" value="1"/>
</dbReference>
<dbReference type="Gene3D" id="3.30.70.260">
    <property type="match status" value="1"/>
</dbReference>
<dbReference type="HAMAP" id="MF_00659">
    <property type="entry name" value="UPF0250"/>
    <property type="match status" value="1"/>
</dbReference>
<dbReference type="InterPro" id="IPR007454">
    <property type="entry name" value="UPF0250_YbeD-like"/>
</dbReference>
<dbReference type="InterPro" id="IPR027471">
    <property type="entry name" value="YbeD-like_sf"/>
</dbReference>
<dbReference type="NCBIfam" id="NF003447">
    <property type="entry name" value="PRK04998.1"/>
    <property type="match status" value="1"/>
</dbReference>
<dbReference type="PANTHER" id="PTHR38036">
    <property type="entry name" value="UPF0250 PROTEIN YBED"/>
    <property type="match status" value="1"/>
</dbReference>
<dbReference type="PANTHER" id="PTHR38036:SF1">
    <property type="entry name" value="UPF0250 PROTEIN YBED"/>
    <property type="match status" value="1"/>
</dbReference>
<dbReference type="Pfam" id="PF04359">
    <property type="entry name" value="DUF493"/>
    <property type="match status" value="1"/>
</dbReference>
<dbReference type="SUPFAM" id="SSF117991">
    <property type="entry name" value="YbeD/HP0495-like"/>
    <property type="match status" value="1"/>
</dbReference>
<feature type="chain" id="PRO_0000209310" description="UPF0250 protein YbeD">
    <location>
        <begin position="1"/>
        <end position="87"/>
    </location>
</feature>
<reference key="1">
    <citation type="journal article" date="2001" name="Nature">
        <title>Complete genome sequence of a multiple drug resistant Salmonella enterica serovar Typhi CT18.</title>
        <authorList>
            <person name="Parkhill J."/>
            <person name="Dougan G."/>
            <person name="James K.D."/>
            <person name="Thomson N.R."/>
            <person name="Pickard D."/>
            <person name="Wain J."/>
            <person name="Churcher C.M."/>
            <person name="Mungall K.L."/>
            <person name="Bentley S.D."/>
            <person name="Holden M.T.G."/>
            <person name="Sebaihia M."/>
            <person name="Baker S."/>
            <person name="Basham D."/>
            <person name="Brooks K."/>
            <person name="Chillingworth T."/>
            <person name="Connerton P."/>
            <person name="Cronin A."/>
            <person name="Davis P."/>
            <person name="Davies R.M."/>
            <person name="Dowd L."/>
            <person name="White N."/>
            <person name="Farrar J."/>
            <person name="Feltwell T."/>
            <person name="Hamlin N."/>
            <person name="Haque A."/>
            <person name="Hien T.T."/>
            <person name="Holroyd S."/>
            <person name="Jagels K."/>
            <person name="Krogh A."/>
            <person name="Larsen T.S."/>
            <person name="Leather S."/>
            <person name="Moule S."/>
            <person name="O'Gaora P."/>
            <person name="Parry C."/>
            <person name="Quail M.A."/>
            <person name="Rutherford K.M."/>
            <person name="Simmonds M."/>
            <person name="Skelton J."/>
            <person name="Stevens K."/>
            <person name="Whitehead S."/>
            <person name="Barrell B.G."/>
        </authorList>
    </citation>
    <scope>NUCLEOTIDE SEQUENCE [LARGE SCALE GENOMIC DNA]</scope>
    <source>
        <strain>CT18</strain>
    </source>
</reference>
<reference key="2">
    <citation type="journal article" date="2003" name="J. Bacteriol.">
        <title>Comparative genomics of Salmonella enterica serovar Typhi strains Ty2 and CT18.</title>
        <authorList>
            <person name="Deng W."/>
            <person name="Liou S.-R."/>
            <person name="Plunkett G. III"/>
            <person name="Mayhew G.F."/>
            <person name="Rose D.J."/>
            <person name="Burland V."/>
            <person name="Kodoyianni V."/>
            <person name="Schwartz D.C."/>
            <person name="Blattner F.R."/>
        </authorList>
    </citation>
    <scope>NUCLEOTIDE SEQUENCE [LARGE SCALE GENOMIC DNA]</scope>
    <source>
        <strain>ATCC 700931 / Ty2</strain>
    </source>
</reference>